<keyword id="KW-0002">3D-structure</keyword>
<keyword id="KW-0903">Direct protein sequencing</keyword>
<keyword id="KW-1015">Disulfide bond</keyword>
<keyword id="KW-0872">Ion channel impairing toxin</keyword>
<keyword id="KW-0528">Neurotoxin</keyword>
<keyword id="KW-0632">Potassium channel impairing toxin</keyword>
<keyword id="KW-0638">Presynaptic neurotoxin</keyword>
<keyword id="KW-0964">Secreted</keyword>
<keyword id="KW-0732">Signal</keyword>
<keyword id="KW-0800">Toxin</keyword>
<keyword id="KW-1220">Voltage-gated potassium channel impairing toxin</keyword>
<protein>
    <recommendedName>
        <fullName>Kunitz-type serine protease inhibitor homolog beta-bungarotoxin B2 chain</fullName>
    </recommendedName>
    <alternativeName>
        <fullName>Beta-2-bungarotoxin</fullName>
    </alternativeName>
</protein>
<feature type="signal peptide" evidence="2 3">
    <location>
        <begin position="1"/>
        <end position="24"/>
    </location>
</feature>
<feature type="chain" id="PRO_0000016864" description="Kunitz-type serine protease inhibitor homolog beta-bungarotoxin B2 chain">
    <location>
        <begin position="25"/>
        <end position="85"/>
    </location>
</feature>
<feature type="domain" description="BPTI/Kunitz inhibitor" evidence="1">
    <location>
        <begin position="31"/>
        <end position="81"/>
    </location>
</feature>
<feature type="disulfide bond" evidence="1 4">
    <location>
        <begin position="31"/>
        <end position="81"/>
    </location>
</feature>
<feature type="disulfide bond" evidence="1 4">
    <location>
        <begin position="40"/>
        <end position="64"/>
    </location>
</feature>
<feature type="disulfide bond" evidence="1 4">
    <location>
        <begin position="56"/>
        <end position="77"/>
    </location>
</feature>
<feature type="disulfide bond" description="Interchain (with an A chain)" evidence="1 4">
    <location>
        <position position="79"/>
    </location>
</feature>
<feature type="sequence conflict" description="In Ref. 4; AA sequence." evidence="6" ref="4">
    <location>
        <position position="44"/>
    </location>
</feature>
<feature type="sequence conflict" description="In Ref. 4; AA sequence." evidence="6" ref="4">
    <original>NGNGNH</original>
    <variation>DGDHGN</variation>
    <location>
        <begin position="65"/>
        <end position="70"/>
    </location>
</feature>
<feature type="sequence conflict" description="In Ref. 4; AA sequence." evidence="6" ref="4">
    <original>LE</original>
    <variation>EL</variation>
    <location>
        <begin position="82"/>
        <end position="83"/>
    </location>
</feature>
<feature type="turn" evidence="7">
    <location>
        <begin position="29"/>
        <end position="32"/>
    </location>
</feature>
<feature type="strand" evidence="7">
    <location>
        <begin position="40"/>
        <end position="42"/>
    </location>
</feature>
<feature type="strand" evidence="7">
    <location>
        <begin position="44"/>
        <end position="50"/>
    </location>
</feature>
<feature type="helix" evidence="7">
    <location>
        <begin position="51"/>
        <end position="53"/>
    </location>
</feature>
<feature type="strand" evidence="7">
    <location>
        <begin position="55"/>
        <end position="61"/>
    </location>
</feature>
<feature type="strand" evidence="7">
    <location>
        <begin position="66"/>
        <end position="68"/>
    </location>
</feature>
<feature type="strand" evidence="7">
    <location>
        <begin position="71"/>
        <end position="73"/>
    </location>
</feature>
<feature type="helix" evidence="7">
    <location>
        <begin position="74"/>
        <end position="81"/>
    </location>
</feature>
<evidence type="ECO:0000255" key="1">
    <source>
        <dbReference type="PROSITE-ProRule" id="PRU00031"/>
    </source>
</evidence>
<evidence type="ECO:0000269" key="2">
    <source>
    </source>
</evidence>
<evidence type="ECO:0000269" key="3">
    <source>
    </source>
</evidence>
<evidence type="ECO:0000269" key="4">
    <source>
    </source>
</evidence>
<evidence type="ECO:0000269" key="5">
    <source>
    </source>
</evidence>
<evidence type="ECO:0000305" key="6"/>
<evidence type="ECO:0007829" key="7">
    <source>
        <dbReference type="PDB" id="1BUN"/>
    </source>
</evidence>
<reference key="1">
    <citation type="journal article" date="1998" name="Biochem. J.">
        <title>Cloning and functional expression of B chains of beta-bungarotoxins from Bungarus multicinctus (Taiwan banded krait).</title>
        <authorList>
            <person name="Wu P.-F."/>
            <person name="Wu S.-N."/>
            <person name="Chang C.-C."/>
            <person name="Chang L.-S."/>
        </authorList>
    </citation>
    <scope>NUCLEOTIDE SEQUENCE [MRNA]</scope>
    <scope>FUNCTION</scope>
    <source>
        <tissue>Venom gland</tissue>
    </source>
</reference>
<reference key="2">
    <citation type="journal article" date="2006" name="Toxicon">
        <title>Divergence of genes encoding B chains of beta-bungarotoxins.</title>
        <authorList>
            <person name="Cheng Y.-C."/>
            <person name="Chen K.-C."/>
            <person name="Lin S.-K."/>
            <person name="Chang L.-S."/>
        </authorList>
    </citation>
    <scope>NUCLEOTIDE SEQUENCE [GENOMIC DNA]</scope>
    <source>
        <tissue>Venom gland</tissue>
    </source>
</reference>
<reference key="3">
    <citation type="journal article" date="2000" name="Eur. J. Biochem.">
        <title>Genetic organization of A chain and B chain of beta-bungarotoxin from Taiwan banded krait (Bungarus multicinctus). A chain genes and B chain genes do not share a common origin.</title>
        <authorList>
            <person name="Wu P.-F."/>
            <person name="Chang L.-S."/>
        </authorList>
    </citation>
    <scope>NUCLEOTIDE SEQUENCE [GENOMIC DNA] OF 1-82</scope>
    <source>
        <tissue>Liver</tissue>
    </source>
</reference>
<reference key="4">
    <citation type="journal article" date="1982" name="J. Biochem.">
        <title>Amino acid sequence of beta 2-bungarotoxin from Bungarus multicinctus venom. The amino acid substitutions in the B chains.</title>
        <authorList>
            <person name="Kondo K."/>
            <person name="Toda H."/>
            <person name="Narita K."/>
            <person name="Lee C.-Y."/>
        </authorList>
    </citation>
    <scope>PROTEIN SEQUENCE OF 25-85</scope>
    <source>
        <tissue>Venom</tissue>
    </source>
</reference>
<reference key="5">
    <citation type="journal article" date="1994" name="Biochem. J.">
        <title>The non-phospholipase A2 subunit of beta-bungarotoxin plays an important role in the phospholipase A2-independent neurotoxic effect: characterization of three isotoxins with a common phospholipase A2 subunit.</title>
        <authorList>
            <person name="Chu C.C."/>
            <person name="Chu S.T."/>
            <person name="Chen S.W."/>
            <person name="Chen Y.H."/>
        </authorList>
    </citation>
    <scope>PROTEIN SEQUENCE OF 25-63</scope>
</reference>
<reference key="6">
    <citation type="journal article" date="1995" name="Structure">
        <title>Structure of beta 2-bungarotoxin: potassium channel binding by Kunitz modules and targeted phospholipase action.</title>
        <authorList>
            <person name="Kwong P.D."/>
            <person name="McDonald N.Q."/>
            <person name="Sigler P.B."/>
            <person name="Hendrickson W.A."/>
        </authorList>
    </citation>
    <scope>X-RAY CRYSTALLOGRAPHY (2.45 ANGSTROMS)</scope>
    <scope>DISULFIDE BONDS</scope>
    <source>
        <tissue>Venom</tissue>
    </source>
</reference>
<organism>
    <name type="scientific">Bungarus multicinctus</name>
    <name type="common">Many-banded krait</name>
    <dbReference type="NCBI Taxonomy" id="8616"/>
    <lineage>
        <taxon>Eukaryota</taxon>
        <taxon>Metazoa</taxon>
        <taxon>Chordata</taxon>
        <taxon>Craniata</taxon>
        <taxon>Vertebrata</taxon>
        <taxon>Euteleostomi</taxon>
        <taxon>Lepidosauria</taxon>
        <taxon>Squamata</taxon>
        <taxon>Bifurcata</taxon>
        <taxon>Unidentata</taxon>
        <taxon>Episquamata</taxon>
        <taxon>Toxicofera</taxon>
        <taxon>Serpentes</taxon>
        <taxon>Colubroidea</taxon>
        <taxon>Elapidae</taxon>
        <taxon>Bungarinae</taxon>
        <taxon>Bungarus</taxon>
    </lineage>
</organism>
<sequence length="85" mass="9568">MSSGGLLLLLGLLTLCAELTPVSSRKRHPDCDKPPDTKICQTVVRAFYYKPSAKRCVQFRYGGCNGNGNHFKSDHLCRCECLEYR</sequence>
<accession>P00989</accession>
<accession>O42299</accession>
<accession>Q1RPT1</accession>
<accession>Q9PRV8</accession>
<accession>Q9PTA3</accession>
<dbReference type="EMBL" id="Y12101">
    <property type="protein sequence ID" value="CAA72810.1"/>
    <property type="molecule type" value="mRNA"/>
</dbReference>
<dbReference type="EMBL" id="AM050151">
    <property type="protein sequence ID" value="CAJ18318.1"/>
    <property type="molecule type" value="Genomic_DNA"/>
</dbReference>
<dbReference type="EMBL" id="AJ251224">
    <property type="protein sequence ID" value="CAB62504.1"/>
    <property type="molecule type" value="Genomic_DNA"/>
</dbReference>
<dbReference type="PIR" id="A44550">
    <property type="entry name" value="TIKFB2"/>
</dbReference>
<dbReference type="PDB" id="1BUN">
    <property type="method" value="X-ray"/>
    <property type="resolution" value="2.45 A"/>
    <property type="chains" value="B=25-85"/>
</dbReference>
<dbReference type="PDBsum" id="1BUN"/>
<dbReference type="SMR" id="P00989"/>
<dbReference type="MINT" id="P00989"/>
<dbReference type="EvolutionaryTrace" id="P00989"/>
<dbReference type="GO" id="GO:0005615">
    <property type="term" value="C:extracellular space"/>
    <property type="evidence" value="ECO:0007669"/>
    <property type="project" value="TreeGrafter"/>
</dbReference>
<dbReference type="GO" id="GO:0015459">
    <property type="term" value="F:potassium channel regulator activity"/>
    <property type="evidence" value="ECO:0007669"/>
    <property type="project" value="UniProtKB-KW"/>
</dbReference>
<dbReference type="GO" id="GO:0004867">
    <property type="term" value="F:serine-type endopeptidase inhibitor activity"/>
    <property type="evidence" value="ECO:0007669"/>
    <property type="project" value="InterPro"/>
</dbReference>
<dbReference type="GO" id="GO:0090729">
    <property type="term" value="F:toxin activity"/>
    <property type="evidence" value="ECO:0007669"/>
    <property type="project" value="UniProtKB-KW"/>
</dbReference>
<dbReference type="CDD" id="cd22619">
    <property type="entry name" value="Kunitz_B2B"/>
    <property type="match status" value="1"/>
</dbReference>
<dbReference type="Gene3D" id="4.10.410.10">
    <property type="entry name" value="Pancreatic trypsin inhibitor Kunitz domain"/>
    <property type="match status" value="1"/>
</dbReference>
<dbReference type="InterPro" id="IPR002223">
    <property type="entry name" value="Kunitz_BPTI"/>
</dbReference>
<dbReference type="InterPro" id="IPR036880">
    <property type="entry name" value="Kunitz_BPTI_sf"/>
</dbReference>
<dbReference type="InterPro" id="IPR020901">
    <property type="entry name" value="Prtase_inh_Kunz-CS"/>
</dbReference>
<dbReference type="InterPro" id="IPR050098">
    <property type="entry name" value="TFPI/VKTCI-like"/>
</dbReference>
<dbReference type="PANTHER" id="PTHR10083:SF374">
    <property type="entry name" value="BPTI_KUNITZ INHIBITOR DOMAIN-CONTAINING PROTEIN"/>
    <property type="match status" value="1"/>
</dbReference>
<dbReference type="PANTHER" id="PTHR10083">
    <property type="entry name" value="KUNITZ-TYPE PROTEASE INHIBITOR-RELATED"/>
    <property type="match status" value="1"/>
</dbReference>
<dbReference type="Pfam" id="PF00014">
    <property type="entry name" value="Kunitz_BPTI"/>
    <property type="match status" value="1"/>
</dbReference>
<dbReference type="PRINTS" id="PR00759">
    <property type="entry name" value="BASICPTASE"/>
</dbReference>
<dbReference type="SMART" id="SM00131">
    <property type="entry name" value="KU"/>
    <property type="match status" value="1"/>
</dbReference>
<dbReference type="SUPFAM" id="SSF57362">
    <property type="entry name" value="BPTI-like"/>
    <property type="match status" value="1"/>
</dbReference>
<dbReference type="PROSITE" id="PS00280">
    <property type="entry name" value="BPTI_KUNITZ_1"/>
    <property type="match status" value="1"/>
</dbReference>
<dbReference type="PROSITE" id="PS50279">
    <property type="entry name" value="BPTI_KUNITZ_2"/>
    <property type="match status" value="1"/>
</dbReference>
<comment type="function">
    <text evidence="5">Beta-2-bungarotoxin is a presynaptic neurotoxin of the venom. The B chain is homologous to venom basic protease inhibitors but has no protease inhibitor activity and blocks voltage-gated potassium channels (Kv).</text>
</comment>
<comment type="subunit">
    <text evidence="4">Heterodimer; disulfide-linked. The A chains have phospholipase A2 activity and the B chains show homology with the basic protease inhibitors.</text>
</comment>
<comment type="subcellular location">
    <subcellularLocation>
        <location>Secreted</location>
    </subcellularLocation>
</comment>
<comment type="tissue specificity">
    <text>Expressed by the venom gland.</text>
</comment>
<comment type="similarity">
    <text evidence="6">Belongs to the venom Kunitz-type family.</text>
</comment>
<name>VKTH2_BUNMU</name>
<proteinExistence type="evidence at protein level"/>